<gene>
    <name evidence="10" type="primary">Mrjp9</name>
    <name evidence="11" type="synonym">409873</name>
    <name evidence="8" type="synonym">GB16324</name>
</gene>
<reference evidence="10" key="1">
    <citation type="journal article" date="2007" name="J. Apic. Res.">
        <title>MRJP9, an ancient protein of the honeybee MRJP family with non-nutritional function.</title>
        <authorList>
            <person name="Albert S."/>
            <person name="Klaudiny J."/>
        </authorList>
        <dbReference type="AGRICOLA" id="IND44014264"/>
    </citation>
    <scope>NUCLEOTIDE SEQUENCE [MRNA]</scope>
</reference>
<reference evidence="12" key="2">
    <citation type="journal article" date="2008" name="Toxicon">
        <title>Proteomic analysis of the honey bee worker venom gland focusing on the mechanisms of protection against tissue damage.</title>
        <authorList>
            <person name="Peiren N."/>
            <person name="de Graaf D.C."/>
            <person name="Vanrobaeys F."/>
            <person name="Danneels E.L."/>
            <person name="Devreese B."/>
            <person name="Van Beeumen J."/>
            <person name="Jacobs F.J."/>
        </authorList>
    </citation>
    <scope>NUCLEOTIDE SEQUENCE [MRNA]</scope>
    <scope>FUNCTION</scope>
    <scope>TISSUE SPECIFICITY</scope>
</reference>
<reference evidence="12" key="3">
    <citation type="journal article" date="2006" name="Nature">
        <title>Insights into social insects from the genome of the honeybee Apis mellifera.</title>
        <authorList>
            <consortium name="Honeybee genome sequencing consortium"/>
        </authorList>
    </citation>
    <scope>NUCLEOTIDE SEQUENCE [LARGE SCALE GENOMIC DNA]</scope>
</reference>
<reference evidence="12" key="4">
    <citation type="journal article" date="2014" name="BMC Genomics">
        <title>Finding the missing honey bee genes: lessons learned from a genome upgrade.</title>
        <authorList>
            <consortium name="HGSC production teams"/>
            <consortium name="Honey Bee Genome Sequencing Consortium"/>
            <person name="Elsik C.G."/>
            <person name="Worley K.C."/>
            <person name="Bennett A.K."/>
            <person name="Beye M."/>
            <person name="Camara F."/>
            <person name="Childers C.P."/>
            <person name="de Graaf D.C."/>
            <person name="Debyser G."/>
            <person name="Deng J."/>
            <person name="Devreese B."/>
            <person name="Elhaik E."/>
            <person name="Evans J.D."/>
            <person name="Foster L.J."/>
            <person name="Graur D."/>
            <person name="Guigo R."/>
            <person name="Hoff K.J."/>
            <person name="Holder M.E."/>
            <person name="Hudson M.E."/>
            <person name="Hunt G.J."/>
            <person name="Jiang H."/>
            <person name="Joshi V."/>
            <person name="Khetani R.S."/>
            <person name="Kosarev P."/>
            <person name="Kovar C.L."/>
            <person name="Ma J."/>
            <person name="Maleszka R."/>
            <person name="Moritz R.F."/>
            <person name="Munoz-Torres M.C."/>
            <person name="Murphy T.D."/>
            <person name="Muzny D.M."/>
            <person name="Newsham I.F."/>
            <person name="Reese J.T."/>
            <person name="Robertson H.M."/>
            <person name="Robinson G.E."/>
            <person name="Rueppell O."/>
            <person name="Solovyev V."/>
            <person name="Stanke M."/>
            <person name="Stolle E."/>
            <person name="Tsuruda J.M."/>
            <person name="Vaerenbergh M.V."/>
            <person name="Waterhouse R.M."/>
            <person name="Weaver D.B."/>
            <person name="Whitfield C.W."/>
            <person name="Wu Y."/>
            <person name="Zdobnov E.M."/>
            <person name="Zhang L."/>
            <person name="Zhu D."/>
            <person name="Gibbs R.A."/>
        </authorList>
    </citation>
    <scope>NUCLEOTIDE SEQUENCE [LARGE SCALE GENOMIC DNA]</scope>
</reference>
<reference evidence="12" key="5">
    <citation type="submission" date="2024-08" db="UniProtKB">
        <authorList>
            <consortium name="RefSeq"/>
        </authorList>
    </citation>
    <scope>NUCLEOTIDE SEQUENCE [LARGE SCALE GENOMIC DNA]</scope>
    <source>
        <strain evidence="12">DH4</strain>
    </source>
</reference>
<reference evidence="9" key="6">
    <citation type="journal article" date="2005" name="Biochim. Biophys. Acta">
        <title>The protein composition of honeybee venom reconsidered by a proteomic approach.</title>
        <authorList>
            <person name="Peiren N."/>
            <person name="Vanrobaeys F."/>
            <person name="de Graaf D.C."/>
            <person name="Devreese B."/>
            <person name="Van Beeumen J."/>
            <person name="Jacobs F.J."/>
        </authorList>
    </citation>
    <scope>FUNCTION</scope>
    <scope>SUBCELLULAR LOCATION</scope>
    <scope>TISSUE SPECIFICITY</scope>
    <scope>IDENTIFICATION BY MASS SPECTROMETRY</scope>
</reference>
<reference evidence="12" key="7">
    <citation type="journal article" date="2006" name="Genome Res.">
        <title>Evolution of the Yellow/Major Royal Jelly Protein family and the emergence of social behavior in honey bees.</title>
        <authorList>
            <person name="Drapeau M.D."/>
            <person name="Albert S."/>
            <person name="Kucharski R."/>
            <person name="Prusko C."/>
            <person name="Maleszka R."/>
        </authorList>
    </citation>
    <scope>IDENTIFICATION</scope>
</reference>
<reference evidence="9" key="8">
    <citation type="journal article" date="2018" name="Insects">
        <title>Transcriptional Control of Honey Bee (Apis mellifera) Major Royal Jelly Proteins by 20-Hydroxyecdysone.</title>
        <authorList>
            <person name="Winkler P."/>
            <person name="Sieg F."/>
            <person name="Buttstedt A."/>
        </authorList>
    </citation>
    <scope>TISSUE SPECIFICITY</scope>
    <scope>ABSENCE OF INDUCTION BY 20-HYDROXYECDYSONE</scope>
</reference>
<reference evidence="9" key="9">
    <citation type="journal article" date="2019" name="Ecol. Evol.">
        <title>The rise and fall of major royal jelly proteins during a honeybee (Apis mellifera) workers' life.</title>
        <authorList>
            <person name="Dobritzsch D."/>
            <person name="Aumer D."/>
            <person name="Fuszard M."/>
            <person name="Erler S."/>
            <person name="Buttstedt A."/>
        </authorList>
    </citation>
    <scope>FUNCTION</scope>
    <scope>SUBCELLULAR LOCATION</scope>
    <scope>TISSUE SPECIFICITY</scope>
    <scope>IDENTIFICATION BY MASS SPECTROMETRY</scope>
</reference>
<reference evidence="9" key="10">
    <citation type="journal article" date="2021" name="Insects">
        <title>Upregulation of Transferrin and Major Royal Jelly Proteins in the Spermathecal Fluid of Mated Honeybee (Apis mellifera) Queens.</title>
        <authorList>
            <person name="Park H.G."/>
            <person name="Kim B.Y."/>
            <person name="Kim J.M."/>
            <person name="Choi Y.S."/>
            <person name="Yoon H.J."/>
            <person name="Lee K.S."/>
            <person name="Jin B.R."/>
        </authorList>
    </citation>
    <scope>FUNCTION</scope>
    <scope>TISSUE SPECIFICITY</scope>
</reference>
<name>MRJP9_APIME</name>
<comment type="function">
    <text evidence="3 4 6 7 9">Component of bee sting venom (PubMed:16112630, PubMed:18573272). Component of royal jelly, a substance produced in the hypopharyngeal gland containing proteins, free amino acids, fatty acids, sugars and other nutrients, which is fed to developing larvae by worker nurse bees; may be present only at trace levels (PubMed:31410279). All larvae are fed some royal jelly (also known as worker jelly) early in their development but it forms the principal source of nutrition for larvae destined to become queen bees (Probable). Produced in the spermatheca of adult queen bees, along with other major royal jelly proteins, where it may act as a nutrient supply for sperm stored by mated queens, or be involved in energy metabolism (PubMed:34442256).</text>
</comment>
<comment type="subcellular location">
    <subcellularLocation>
        <location evidence="3 4 6">Secreted</location>
    </subcellularLocation>
    <text evidence="3 4 6">Minor component of royal jelly (PubMed:31410279). Component of bee sting venom (PubMed:16112630, PubMed:18573272).</text>
</comment>
<comment type="tissue specificity">
    <text evidence="3 4 5 6 7">Expressed at very low levels in the hypopharyngeal glands of adult worker bees (at protein level); expression peaks at 12 days post eclosion (PubMed:31410279). Secreted into bee venom in the sting apparatus (at protein level) (PubMed:16112630, PubMed:18573272). Expressed in the brains of adult worker bees peaking at 12 days post eclosion (at protein level) (PubMed:31410279). Expressed in the spermatheca of adult queen bees (at protein level); expression levels are higher in mated queens than in virgin queens (PubMed:34442256). Along with Mrjp8 expressed at very low levels in the head of worker bees compared to other major royal jelly proteins (PubMed:30235865).</text>
</comment>
<comment type="induction">
    <text evidence="5">Unlike many other major royal jelly proteins, not down-regulated by the ecdysteroid 20-hydroxyecdysone (ecdysterone or 20E).</text>
</comment>
<comment type="similarity">
    <text evidence="9">Belongs to the major royal jelly protein family.</text>
</comment>
<sequence length="423" mass="48688">MSFNIWWLILYFSIVCQAKAHYSLRDFKANIFQVKYQWKYFDYNFGSDEKRQAAIQSGEYNYKNNVPIDVDRWNGKTFVTILRNDGVPSSLNVISNKIGNGGPLLEPYPNWSWAKNQNCSGITSVYRIAIDEWDRLWVLDNGISGETSVCPSQIVVFDLKNSKLLKQVKIPHDIAINSTTGKRNVVTPIVQSFDYNNTWVYIADVEGYALIIYNNADDSFQRLTSSTFVYDPRYTKYTINDESFSLQDGILGMALSHKTQNLYYSAMSSHNLNYVNTKQFTQGKFQANDIQYQGASDILWTQASAKAISETGALFFGLVSDTALGCWNENRPLKRRNIEIVAKNNDTLQFISGIKIIKQISSNIYERQNNEYIWIVSNKYQKIANGDLNFNEVNFRILNAPVNQLIRYTRCENPKTNFFSIFL</sequence>
<dbReference type="EMBL" id="DQ000307">
    <property type="protein sequence ID" value="AAY21180.1"/>
    <property type="molecule type" value="mRNA"/>
</dbReference>
<dbReference type="RefSeq" id="NP_001019868.1">
    <property type="nucleotide sequence ID" value="NM_001024697.1"/>
</dbReference>
<dbReference type="SMR" id="A0A7M6W880"/>
<dbReference type="Allergome" id="9555">
    <property type="allergen name" value="Api m 11"/>
</dbReference>
<dbReference type="Allergome" id="9557">
    <property type="allergen name" value="Api m 11.0201"/>
</dbReference>
<dbReference type="PaxDb" id="7460-GB55215-PA"/>
<dbReference type="EnsemblMetazoa" id="NM_001024697">
    <property type="protein sequence ID" value="NP_001019868"/>
    <property type="gene ID" value="GeneID_409873"/>
</dbReference>
<dbReference type="GeneID" id="409873"/>
<dbReference type="KEGG" id="ame:409873"/>
<dbReference type="CTD" id="409873"/>
<dbReference type="eggNOG" id="ENOG502SCJK">
    <property type="taxonomic scope" value="Eukaryota"/>
</dbReference>
<dbReference type="HOGENOM" id="CLU_031076_2_1_1"/>
<dbReference type="OMA" id="NHIAQND"/>
<dbReference type="OrthoDB" id="3199782at2759"/>
<dbReference type="Proteomes" id="UP000005203">
    <property type="component" value="Linkage group LG11"/>
</dbReference>
<dbReference type="GO" id="GO:0005576">
    <property type="term" value="C:extracellular region"/>
    <property type="evidence" value="ECO:0007669"/>
    <property type="project" value="UniProtKB-SubCell"/>
</dbReference>
<dbReference type="Gene3D" id="2.120.10.30">
    <property type="entry name" value="TolB, C-terminal domain"/>
    <property type="match status" value="1"/>
</dbReference>
<dbReference type="InterPro" id="IPR011042">
    <property type="entry name" value="6-blade_b-propeller_TolB-like"/>
</dbReference>
<dbReference type="InterPro" id="IPR017996">
    <property type="entry name" value="Royal_jelly/protein_yellow"/>
</dbReference>
<dbReference type="PANTHER" id="PTHR10009:SF7">
    <property type="entry name" value="GH10609P-RELATED"/>
    <property type="match status" value="1"/>
</dbReference>
<dbReference type="PANTHER" id="PTHR10009">
    <property type="entry name" value="PROTEIN YELLOW-RELATED"/>
    <property type="match status" value="1"/>
</dbReference>
<dbReference type="Pfam" id="PF03022">
    <property type="entry name" value="MRJP"/>
    <property type="match status" value="1"/>
</dbReference>
<dbReference type="PRINTS" id="PR01366">
    <property type="entry name" value="ROYALJELLY"/>
</dbReference>
<dbReference type="SUPFAM" id="SSF101898">
    <property type="entry name" value="NHL repeat"/>
    <property type="match status" value="1"/>
</dbReference>
<protein>
    <recommendedName>
        <fullName evidence="9">Major royal jelly protein 9</fullName>
    </recommendedName>
    <alternativeName>
        <fullName evidence="9">Bee-milk protein Mrjp9</fullName>
    </alternativeName>
</protein>
<keyword id="KW-0325">Glycoprotein</keyword>
<keyword id="KW-1185">Reference proteome</keyword>
<keyword id="KW-0964">Secreted</keyword>
<keyword id="KW-0732">Signal</keyword>
<proteinExistence type="evidence at protein level"/>
<evidence type="ECO:0000255" key="1"/>
<evidence type="ECO:0000255" key="2">
    <source>
        <dbReference type="PROSITE-ProRule" id="PRU00498"/>
    </source>
</evidence>
<evidence type="ECO:0000269" key="3">
    <source>
    </source>
</evidence>
<evidence type="ECO:0000269" key="4">
    <source>
    </source>
</evidence>
<evidence type="ECO:0000269" key="5">
    <source>
    </source>
</evidence>
<evidence type="ECO:0000269" key="6">
    <source>
    </source>
</evidence>
<evidence type="ECO:0000269" key="7">
    <source>
    </source>
</evidence>
<evidence type="ECO:0000303" key="8">
    <source>
    </source>
</evidence>
<evidence type="ECO:0000305" key="9"/>
<evidence type="ECO:0000312" key="10">
    <source>
        <dbReference type="EMBL" id="AAY21180.1"/>
    </source>
</evidence>
<evidence type="ECO:0000312" key="11">
    <source>
        <dbReference type="EnsemblMetazoa" id="NP_001019868"/>
    </source>
</evidence>
<evidence type="ECO:0000312" key="12">
    <source>
        <dbReference type="RefSeq" id="NP_001019868.1"/>
    </source>
</evidence>
<feature type="signal peptide" evidence="1">
    <location>
        <begin position="1"/>
        <end position="20"/>
    </location>
</feature>
<feature type="chain" id="PRO_5035543970" description="Major royal jelly protein 9" evidence="1">
    <location>
        <begin position="21"/>
        <end position="423"/>
    </location>
</feature>
<feature type="glycosylation site" description="N-linked (GlcNAc...) asparagine" evidence="2">
    <location>
        <position position="110"/>
    </location>
</feature>
<feature type="glycosylation site" description="N-linked (GlcNAc...) asparagine" evidence="2">
    <location>
        <position position="118"/>
    </location>
</feature>
<feature type="glycosylation site" description="N-linked (GlcNAc...) asparagine" evidence="2">
    <location>
        <position position="177"/>
    </location>
</feature>
<feature type="glycosylation site" description="N-linked (GlcNAc...) asparagine" evidence="2">
    <location>
        <position position="196"/>
    </location>
</feature>
<feature type="glycosylation site" description="N-linked (GlcNAc...) asparagine" evidence="2">
    <location>
        <position position="345"/>
    </location>
</feature>
<organism evidence="10">
    <name type="scientific">Apis mellifera</name>
    <name type="common">Honeybee</name>
    <dbReference type="NCBI Taxonomy" id="7460"/>
    <lineage>
        <taxon>Eukaryota</taxon>
        <taxon>Metazoa</taxon>
        <taxon>Ecdysozoa</taxon>
        <taxon>Arthropoda</taxon>
        <taxon>Hexapoda</taxon>
        <taxon>Insecta</taxon>
        <taxon>Pterygota</taxon>
        <taxon>Neoptera</taxon>
        <taxon>Endopterygota</taxon>
        <taxon>Hymenoptera</taxon>
        <taxon>Apocrita</taxon>
        <taxon>Aculeata</taxon>
        <taxon>Apoidea</taxon>
        <taxon>Anthophila</taxon>
        <taxon>Apidae</taxon>
        <taxon>Apis</taxon>
    </lineage>
</organism>
<accession>A0A7M6W880</accession>
<accession>A0A8B6WZ33</accession>
<accession>A0A8U0WQA6</accession>
<accession>Q4ZJX1</accession>